<sequence length="180" mass="19715">MAFSFKSFFGGADDEEEEYEDSGYEQQPNQGQQQPVNSQQQNTSNQSYSGYNNQNQNRNGFAYDNGYRQQPKMSAVNSSTQSANNSAKIDSHIALFVPKVFSDAKTIVNQLLLHEAVIVNFSAIDETQSAKIVDFVAGAIYAVEGSIEKISDEIWLIAPNNYAVSGSGSAANSMGRNARF</sequence>
<proteinExistence type="inferred from homology"/>
<comment type="function">
    <text evidence="1">Cell division protein that is part of the divisome complex and is recruited early to the Z-ring. Probably stimulates Z-ring formation, perhaps through the cross-linking of FtsZ protofilaments. Its function overlaps with FtsA.</text>
</comment>
<comment type="subunit">
    <text evidence="1">Homodimer. Interacts with FtsZ.</text>
</comment>
<comment type="subcellular location">
    <subcellularLocation>
        <location evidence="1">Cytoplasm</location>
    </subcellularLocation>
    <text evidence="1">Localizes to the division site, in a FtsZ-dependent manner.</text>
</comment>
<comment type="similarity">
    <text evidence="1">Belongs to the SepF family.</text>
</comment>
<evidence type="ECO:0000255" key="1">
    <source>
        <dbReference type="HAMAP-Rule" id="MF_01197"/>
    </source>
</evidence>
<evidence type="ECO:0000256" key="2">
    <source>
        <dbReference type="SAM" id="MobiDB-lite"/>
    </source>
</evidence>
<dbReference type="EMBL" id="CP000411">
    <property type="protein sequence ID" value="ABJ57038.1"/>
    <property type="molecule type" value="Genomic_DNA"/>
</dbReference>
<dbReference type="RefSeq" id="WP_011677630.1">
    <property type="nucleotide sequence ID" value="NC_008528.1"/>
</dbReference>
<dbReference type="SMR" id="Q04ET4"/>
<dbReference type="STRING" id="203123.OEOE_1142"/>
<dbReference type="KEGG" id="ooe:OEOE_1142"/>
<dbReference type="PATRIC" id="fig|203123.7.peg.1167"/>
<dbReference type="eggNOG" id="COG1799">
    <property type="taxonomic scope" value="Bacteria"/>
</dbReference>
<dbReference type="HOGENOM" id="CLU_078499_4_1_9"/>
<dbReference type="Proteomes" id="UP000000774">
    <property type="component" value="Chromosome"/>
</dbReference>
<dbReference type="GO" id="GO:0005737">
    <property type="term" value="C:cytoplasm"/>
    <property type="evidence" value="ECO:0007669"/>
    <property type="project" value="UniProtKB-SubCell"/>
</dbReference>
<dbReference type="GO" id="GO:0000917">
    <property type="term" value="P:division septum assembly"/>
    <property type="evidence" value="ECO:0007669"/>
    <property type="project" value="UniProtKB-KW"/>
</dbReference>
<dbReference type="GO" id="GO:0043093">
    <property type="term" value="P:FtsZ-dependent cytokinesis"/>
    <property type="evidence" value="ECO:0007669"/>
    <property type="project" value="UniProtKB-UniRule"/>
</dbReference>
<dbReference type="Gene3D" id="3.30.110.150">
    <property type="entry name" value="SepF-like protein"/>
    <property type="match status" value="1"/>
</dbReference>
<dbReference type="HAMAP" id="MF_01197">
    <property type="entry name" value="SepF"/>
    <property type="match status" value="1"/>
</dbReference>
<dbReference type="InterPro" id="IPR023052">
    <property type="entry name" value="Cell_div_SepF"/>
</dbReference>
<dbReference type="InterPro" id="IPR007561">
    <property type="entry name" value="Cell_div_SepF/SepF-rel"/>
</dbReference>
<dbReference type="InterPro" id="IPR038594">
    <property type="entry name" value="SepF-like_sf"/>
</dbReference>
<dbReference type="PANTHER" id="PTHR35798">
    <property type="entry name" value="CELL DIVISION PROTEIN SEPF"/>
    <property type="match status" value="1"/>
</dbReference>
<dbReference type="PANTHER" id="PTHR35798:SF1">
    <property type="entry name" value="CELL DIVISION PROTEIN SEPF"/>
    <property type="match status" value="1"/>
</dbReference>
<dbReference type="Pfam" id="PF04472">
    <property type="entry name" value="SepF"/>
    <property type="match status" value="1"/>
</dbReference>
<organism>
    <name type="scientific">Oenococcus oeni (strain ATCC BAA-331 / PSU-1)</name>
    <dbReference type="NCBI Taxonomy" id="203123"/>
    <lineage>
        <taxon>Bacteria</taxon>
        <taxon>Bacillati</taxon>
        <taxon>Bacillota</taxon>
        <taxon>Bacilli</taxon>
        <taxon>Lactobacillales</taxon>
        <taxon>Lactobacillaceae</taxon>
        <taxon>Oenococcus</taxon>
    </lineage>
</organism>
<name>SEPF_OENOB</name>
<protein>
    <recommendedName>
        <fullName evidence="1">Cell division protein SepF</fullName>
    </recommendedName>
</protein>
<gene>
    <name evidence="1" type="primary">sepF</name>
    <name type="ordered locus">OEOE_1142</name>
</gene>
<feature type="chain" id="PRO_0000334054" description="Cell division protein SepF">
    <location>
        <begin position="1"/>
        <end position="180"/>
    </location>
</feature>
<feature type="region of interest" description="Disordered" evidence="2">
    <location>
        <begin position="1"/>
        <end position="66"/>
    </location>
</feature>
<feature type="compositionally biased region" description="Acidic residues" evidence="2">
    <location>
        <begin position="12"/>
        <end position="23"/>
    </location>
</feature>
<feature type="compositionally biased region" description="Low complexity" evidence="2">
    <location>
        <begin position="24"/>
        <end position="57"/>
    </location>
</feature>
<accession>Q04ET4</accession>
<keyword id="KW-0131">Cell cycle</keyword>
<keyword id="KW-0132">Cell division</keyword>
<keyword id="KW-0963">Cytoplasm</keyword>
<keyword id="KW-1185">Reference proteome</keyword>
<keyword id="KW-0717">Septation</keyword>
<reference key="1">
    <citation type="journal article" date="2006" name="Proc. Natl. Acad. Sci. U.S.A.">
        <title>Comparative genomics of the lactic acid bacteria.</title>
        <authorList>
            <person name="Makarova K.S."/>
            <person name="Slesarev A."/>
            <person name="Wolf Y.I."/>
            <person name="Sorokin A."/>
            <person name="Mirkin B."/>
            <person name="Koonin E.V."/>
            <person name="Pavlov A."/>
            <person name="Pavlova N."/>
            <person name="Karamychev V."/>
            <person name="Polouchine N."/>
            <person name="Shakhova V."/>
            <person name="Grigoriev I."/>
            <person name="Lou Y."/>
            <person name="Rohksar D."/>
            <person name="Lucas S."/>
            <person name="Huang K."/>
            <person name="Goodstein D.M."/>
            <person name="Hawkins T."/>
            <person name="Plengvidhya V."/>
            <person name="Welker D."/>
            <person name="Hughes J."/>
            <person name="Goh Y."/>
            <person name="Benson A."/>
            <person name="Baldwin K."/>
            <person name="Lee J.-H."/>
            <person name="Diaz-Muniz I."/>
            <person name="Dosti B."/>
            <person name="Smeianov V."/>
            <person name="Wechter W."/>
            <person name="Barabote R."/>
            <person name="Lorca G."/>
            <person name="Altermann E."/>
            <person name="Barrangou R."/>
            <person name="Ganesan B."/>
            <person name="Xie Y."/>
            <person name="Rawsthorne H."/>
            <person name="Tamir D."/>
            <person name="Parker C."/>
            <person name="Breidt F."/>
            <person name="Broadbent J.R."/>
            <person name="Hutkins R."/>
            <person name="O'Sullivan D."/>
            <person name="Steele J."/>
            <person name="Unlu G."/>
            <person name="Saier M.H. Jr."/>
            <person name="Klaenhammer T."/>
            <person name="Richardson P."/>
            <person name="Kozyavkin S."/>
            <person name="Weimer B.C."/>
            <person name="Mills D.A."/>
        </authorList>
    </citation>
    <scope>NUCLEOTIDE SEQUENCE [LARGE SCALE GENOMIC DNA]</scope>
    <source>
        <strain>ATCC BAA-331 / PSU-1</strain>
    </source>
</reference>